<comment type="similarity">
    <text evidence="1">Belongs to the UPF0329 family.</text>
</comment>
<name>YB08_ENCCU</name>
<proteinExistence type="inferred from homology"/>
<evidence type="ECO:0000305" key="1"/>
<reference key="1">
    <citation type="journal article" date="2001" name="Nature">
        <title>Genome sequence and gene compaction of the eukaryote parasite Encephalitozoon cuniculi.</title>
        <authorList>
            <person name="Katinka M.D."/>
            <person name="Duprat S."/>
            <person name="Cornillot E."/>
            <person name="Metenier G."/>
            <person name="Thomarat F."/>
            <person name="Prensier G."/>
            <person name="Barbe V."/>
            <person name="Peyretaillade E."/>
            <person name="Brottier P."/>
            <person name="Wincker P."/>
            <person name="Delbac F."/>
            <person name="El Alaoui H."/>
            <person name="Peyret P."/>
            <person name="Saurin W."/>
            <person name="Gouy M."/>
            <person name="Weissenbach J."/>
            <person name="Vivares C.P."/>
        </authorList>
    </citation>
    <scope>NUCLEOTIDE SEQUENCE [LARGE SCALE GENOMIC DNA]</scope>
    <source>
        <strain>GB-M1</strain>
    </source>
</reference>
<reference key="2">
    <citation type="journal article" date="2009" name="BMC Genomics">
        <title>Identification of transcriptional signals in Encephalitozoon cuniculi widespread among Microsporidia phylum: support for accurate structural genome annotation.</title>
        <authorList>
            <person name="Peyretaillade E."/>
            <person name="Goncalves O."/>
            <person name="Terrat S."/>
            <person name="Dugat-Bony E."/>
            <person name="Wincker P."/>
            <person name="Cornman R.S."/>
            <person name="Evans J.D."/>
            <person name="Delbac F."/>
            <person name="Peyret P."/>
        </authorList>
    </citation>
    <scope>GENOME REANNOTATION</scope>
    <source>
        <strain>GB-M1</strain>
    </source>
</reference>
<sequence length="112" mass="13232">MEAHSEHLCLRMIRLNADEMEEPLLHYMSYERLVNTYERYKSIGIVAEIAKRVFVETRILMTKVSTAQCMKPGREKRWKGSVRRRSLENFRLRGGIQWYSHACRGMAIGLQN</sequence>
<dbReference type="EMBL" id="AL590450">
    <property type="protein sequence ID" value="CAD25918.2"/>
    <property type="molecule type" value="Genomic_DNA"/>
</dbReference>
<dbReference type="RefSeq" id="NP_586314.2">
    <property type="nucleotide sequence ID" value="NM_001042147.2"/>
</dbReference>
<dbReference type="GeneID" id="859965"/>
<dbReference type="KEGG" id="ecu:ECU11_0080"/>
<dbReference type="VEuPathDB" id="MicrosporidiaDB:ECU11_0080"/>
<dbReference type="HOGENOM" id="CLU_2145833_0_0_1"/>
<dbReference type="InParanoid" id="P0CT01"/>
<dbReference type="Proteomes" id="UP000000819">
    <property type="component" value="Chromosome XI"/>
</dbReference>
<dbReference type="InterPro" id="IPR022115">
    <property type="entry name" value="DUF3654"/>
</dbReference>
<dbReference type="Pfam" id="PF12376">
    <property type="entry name" value="DUF3654"/>
    <property type="match status" value="1"/>
</dbReference>
<organism>
    <name type="scientific">Encephalitozoon cuniculi (strain GB-M1)</name>
    <name type="common">Microsporidian parasite</name>
    <dbReference type="NCBI Taxonomy" id="284813"/>
    <lineage>
        <taxon>Eukaryota</taxon>
        <taxon>Fungi</taxon>
        <taxon>Fungi incertae sedis</taxon>
        <taxon>Microsporidia</taxon>
        <taxon>Unikaryonidae</taxon>
        <taxon>Encephalitozoon</taxon>
    </lineage>
</organism>
<keyword id="KW-1185">Reference proteome</keyword>
<accession>P0CT01</accession>
<accession>Q8STI0</accession>
<gene>
    <name type="ordered locus">ECU11_0080</name>
</gene>
<protein>
    <recommendedName>
        <fullName>UPF0329 protein ECU11_0080</fullName>
    </recommendedName>
</protein>
<feature type="chain" id="PRO_0000422377" description="UPF0329 protein ECU11_0080">
    <location>
        <begin position="1"/>
        <end position="112"/>
    </location>
</feature>